<protein>
    <recommendedName>
        <fullName>High-potential iron-sulfur protein</fullName>
        <shortName>HiPIP</shortName>
    </recommendedName>
</protein>
<evidence type="ECO:0000250" key="1"/>
<evidence type="ECO:0000255" key="2">
    <source>
        <dbReference type="PROSITE-ProRule" id="PRU00705"/>
    </source>
</evidence>
<evidence type="ECO:0000269" key="3">
    <source>
    </source>
</evidence>
<evidence type="ECO:0000269" key="4">
    <source>
    </source>
</evidence>
<evidence type="ECO:0000269" key="5">
    <source>
    </source>
</evidence>
<evidence type="ECO:0000269" key="6">
    <source>
    </source>
</evidence>
<evidence type="ECO:0000269" key="7">
    <source>
    </source>
</evidence>
<evidence type="ECO:0000269" key="8">
    <source>
    </source>
</evidence>
<evidence type="ECO:0000269" key="9">
    <source>
    </source>
</evidence>
<evidence type="ECO:0000269" key="10">
    <source ref="3"/>
</evidence>
<evidence type="ECO:0007829" key="11">
    <source>
        <dbReference type="PDB" id="1HLQ"/>
    </source>
</evidence>
<keyword id="KW-0002">3D-structure</keyword>
<keyword id="KW-0004">4Fe-4S</keyword>
<keyword id="KW-0903">Direct protein sequencing</keyword>
<keyword id="KW-0249">Electron transport</keyword>
<keyword id="KW-0408">Iron</keyword>
<keyword id="KW-0411">Iron-sulfur</keyword>
<keyword id="KW-0479">Metal-binding</keyword>
<keyword id="KW-0813">Transport</keyword>
<name>HIP_RHOFE</name>
<sequence length="75" mass="7849">AAPLVAETDANAKSLGYVADTTKADKTKYPKHTKDQSCSTCALYQGKTAPQGACPLFAGKEVVAKGWCSAWAKKA</sequence>
<accession>P80882</accession>
<comment type="function">
    <text evidence="2 3 5 6 7 8 10">Specific class of high-redox-potential 4Fe-4S ferredoxins. Functions in anaerobic electron transport in most purple and in some other photosynthetic bacteria and in at least one genus (Paracoccus) of halophilic, denitrifying bacteria. Competent in photosynthetic electron transfer to oxidized cytochrome bc1 complex via the membrane-bound c-type tetraheme.</text>
</comment>
<comment type="biophysicochemical properties">
    <redoxPotential>
        <text evidence="6">E(0) is 351 +/-16 mV.</text>
    </redoxPotential>
</comment>
<comment type="subunit">
    <text evidence="1 6">Homodimer (By similarity). Monomer at different ionic strengths (PubMed:7574702).</text>
</comment>
<comment type="mass spectrometry" mass="7849.64" method="Electrospray" evidence="9"/>
<comment type="similarity">
    <text evidence="2">Belongs to the high-potential iron-sulfur protein (HiPIP) family.</text>
</comment>
<dbReference type="PDB" id="1HLQ">
    <property type="method" value="X-ray"/>
    <property type="resolution" value="1.45 A"/>
    <property type="chains" value="A/B/C=1-75"/>
</dbReference>
<dbReference type="PDBsum" id="1HLQ"/>
<dbReference type="SMR" id="P80882"/>
<dbReference type="STRING" id="28066.RF819_00185"/>
<dbReference type="EvolutionaryTrace" id="P80882"/>
<dbReference type="GO" id="GO:0051539">
    <property type="term" value="F:4 iron, 4 sulfur cluster binding"/>
    <property type="evidence" value="ECO:0007669"/>
    <property type="project" value="UniProtKB-KW"/>
</dbReference>
<dbReference type="GO" id="GO:0009055">
    <property type="term" value="F:electron transfer activity"/>
    <property type="evidence" value="ECO:0007669"/>
    <property type="project" value="InterPro"/>
</dbReference>
<dbReference type="GO" id="GO:0046872">
    <property type="term" value="F:metal ion binding"/>
    <property type="evidence" value="ECO:0007669"/>
    <property type="project" value="UniProtKB-KW"/>
</dbReference>
<dbReference type="GO" id="GO:0019646">
    <property type="term" value="P:aerobic electron transport chain"/>
    <property type="evidence" value="ECO:0007669"/>
    <property type="project" value="InterPro"/>
</dbReference>
<dbReference type="Gene3D" id="4.10.490.10">
    <property type="entry name" value="High potential iron-sulphur protein"/>
    <property type="match status" value="1"/>
</dbReference>
<dbReference type="InterPro" id="IPR000170">
    <property type="entry name" value="High_potential_FeS_prot"/>
</dbReference>
<dbReference type="InterPro" id="IPR036369">
    <property type="entry name" value="HIPIP_sf"/>
</dbReference>
<dbReference type="Pfam" id="PF01355">
    <property type="entry name" value="HIPIP"/>
    <property type="match status" value="1"/>
</dbReference>
<dbReference type="SUPFAM" id="SSF57652">
    <property type="entry name" value="HIPIP (high potential iron protein)"/>
    <property type="match status" value="1"/>
</dbReference>
<dbReference type="PROSITE" id="PS51373">
    <property type="entry name" value="HIPIP"/>
    <property type="match status" value="1"/>
</dbReference>
<reference key="1">
    <citation type="journal article" date="1997" name="Eur. J. Biochem.">
        <title>The primary structure of Rhodoferax fermentans high-potential iron-sulfur protein, an electron donor to the photosynthetic reaction center.</title>
        <authorList>
            <person name="van Driessche G."/>
            <person name="Ciurli S."/>
            <person name="Hochkoeppler A."/>
            <person name="van Beeumen J.J."/>
        </authorList>
    </citation>
    <scope>PROTEIN SEQUENCE</scope>
    <scope>MASS SPECTROMETRY</scope>
    <source>
        <strain>JMC 7819</strain>
    </source>
</reference>
<reference key="2">
    <citation type="journal article" date="1995" name="Arch. Biochem. Biophys.">
        <title>Isolation, characterization, and functional role of the high-potential iron-sulfur protein (HiPIP) from Rhodoferax fermentans.</title>
        <authorList>
            <person name="Hochkoeppler A."/>
            <person name="Kofod P."/>
            <person name="Ferro G."/>
            <person name="Ciurli S."/>
        </authorList>
    </citation>
    <scope>FUNCTION</scope>
    <scope>SUBUNIT</scope>
    <scope>BIOPHYSICOCHEMICAL PROPERTIES</scope>
</reference>
<reference key="3">
    <citation type="journal article" date="1995" name="Biochim. Biophys. Acta">
        <title>The electron transport system of the facultative phototroph Rhodoferax fermentans. I. A functional, thermodynamic and spectroscopic study of the respiratory chain of dark- and light-grown cells.</title>
        <authorList>
            <person name="Hochkoeppler A."/>
            <person name="Moschettini G."/>
            <person name="Zannoni D."/>
        </authorList>
    </citation>
    <scope>FUNCTION</scope>
    <source>
        <strain>JMC 7819</strain>
    </source>
</reference>
<reference key="4">
    <citation type="journal article" date="1995" name="FEBS Lett.">
        <title>The high potential iron-sulfur protein (HiPIP) from Rhodoferax fermentans is competent in photosynthetic electron transfer.</title>
        <authorList>
            <person name="Hochkoeppler A."/>
            <person name="Ciurli S."/>
            <person name="Venturoli G."/>
            <person name="Zannoni D."/>
        </authorList>
    </citation>
    <scope>FUNCTION</scope>
</reference>
<reference key="5">
    <citation type="journal article" date="1995" name="FEBS Lett.">
        <title>HiPiP oxido-reductase activity in membranes from aerobically grown cells of the facultative phototroph Rhodoferax fermentans.</title>
        <authorList>
            <person name="Hochkoeppler A."/>
            <person name="Kofod P."/>
            <person name="Zannoni D."/>
        </authorList>
    </citation>
    <scope>FUNCTION</scope>
</reference>
<reference key="6">
    <citation type="journal article" date="1996" name="Proc. Natl. Acad. Sci. U.S.A.">
        <title>Kinetics of photo-induced electron transfer from high-potential iron-sulfur protein to the photosynthetic reaction center of the purple phototroph Rhodoferax fermentans.</title>
        <authorList>
            <person name="Hochkoeppler A."/>
            <person name="Zannoni D."/>
            <person name="Ciurli S."/>
            <person name="Meyer T.E."/>
            <person name="Cusanovich M.A."/>
            <person name="Tollin G."/>
        </authorList>
    </citation>
    <scope>FUNCTION</scope>
</reference>
<reference key="7">
    <citation type="journal article" date="1999" name="Biochim. Biophys. Acta">
        <title>On the role of high-potential iron-sulfur proteins and cytochromes in the respiratory chain of two facultative phototrophs.</title>
        <authorList>
            <person name="Bonora P."/>
            <person name="Principi I."/>
            <person name="Monti B."/>
            <person name="Ciurli S."/>
            <person name="Zannoni D."/>
            <person name="Hochkoeppler A."/>
        </authorList>
    </citation>
    <scope>FUNCTION</scope>
</reference>
<reference key="8">
    <citation type="journal article" date="1996" name="Eur. J. Biochem.">
        <title>1H NMR of high-potential iron-sulfur protein from the purple non-sulfurbacterium Rhodoferax fermentans.</title>
        <authorList>
            <person name="Ciurli S."/>
            <person name="Cremonini M.A."/>
            <person name="Kofod P."/>
            <person name="Luchinat C."/>
        </authorList>
    </citation>
    <scope>STRUCTURE BY NMR</scope>
    <scope>METAL-BINDING</scope>
</reference>
<reference key="9">
    <citation type="journal article" date="2003" name="Acta Crystallogr. D">
        <title>Structure of Rhodoferax fermentans high-potential iron-sulfur protein solved by MAD.</title>
        <authorList>
            <person name="Gonzalez A."/>
            <person name="Benini S."/>
            <person name="Ciurli S."/>
        </authorList>
    </citation>
    <scope>X-RAY CRYSTALLOGRAPHY (1.45 ANGSTROMS) IN COMPLEX WITH IRON-SULFUR (4FE-4S)</scope>
</reference>
<feature type="chain" id="PRO_0000220424" description="High-potential iron-sulfur protein">
    <location>
        <begin position="1"/>
        <end position="75"/>
    </location>
</feature>
<feature type="binding site" evidence="4">
    <location>
        <position position="38"/>
    </location>
    <ligand>
        <name>[4Fe-4S] cluster</name>
        <dbReference type="ChEBI" id="CHEBI:49883"/>
    </ligand>
</feature>
<feature type="binding site" evidence="4">
    <location>
        <position position="41"/>
    </location>
    <ligand>
        <name>[4Fe-4S] cluster</name>
        <dbReference type="ChEBI" id="CHEBI:49883"/>
    </ligand>
</feature>
<feature type="binding site" evidence="4">
    <location>
        <position position="54"/>
    </location>
    <ligand>
        <name>[4Fe-4S] cluster</name>
        <dbReference type="ChEBI" id="CHEBI:49883"/>
    </ligand>
</feature>
<feature type="binding site" evidence="4">
    <location>
        <position position="68"/>
    </location>
    <ligand>
        <name>[4Fe-4S] cluster</name>
        <dbReference type="ChEBI" id="CHEBI:49883"/>
    </ligand>
</feature>
<feature type="helix" evidence="11">
    <location>
        <begin position="10"/>
        <end position="14"/>
    </location>
</feature>
<feature type="strand" evidence="11">
    <location>
        <begin position="18"/>
        <end position="20"/>
    </location>
</feature>
<feature type="helix" evidence="11">
    <location>
        <begin position="21"/>
        <end position="23"/>
    </location>
</feature>
<feature type="turn" evidence="11">
    <location>
        <begin position="26"/>
        <end position="28"/>
    </location>
</feature>
<feature type="helix" evidence="11">
    <location>
        <begin position="38"/>
        <end position="40"/>
    </location>
</feature>
<feature type="strand" evidence="11">
    <location>
        <begin position="49"/>
        <end position="52"/>
    </location>
</feature>
<feature type="strand" evidence="11">
    <location>
        <begin position="60"/>
        <end position="63"/>
    </location>
</feature>
<proteinExistence type="evidence at protein level"/>
<organism>
    <name type="scientific">Rhodoferax fermentans</name>
    <dbReference type="NCBI Taxonomy" id="28066"/>
    <lineage>
        <taxon>Bacteria</taxon>
        <taxon>Pseudomonadati</taxon>
        <taxon>Pseudomonadota</taxon>
        <taxon>Betaproteobacteria</taxon>
        <taxon>Burkholderiales</taxon>
        <taxon>Comamonadaceae</taxon>
        <taxon>Rhodoferax</taxon>
    </lineage>
</organism>
<gene>
    <name type="primary">hip</name>
</gene>